<reference key="1">
    <citation type="journal article" date="2000" name="Biosci. Biotechnol. Biochem.">
        <title>Purification and characterization of acid-stable protopectinase produced by Aspergillus awamori in solid-state fermentation.</title>
        <authorList>
            <person name="Nagai M."/>
            <person name="Ozawa A."/>
            <person name="Katsuragi T."/>
            <person name="Sakai T."/>
        </authorList>
    </citation>
    <scope>NUCLEOTIDE SEQUENCE [GENOMIC DNA]</scope>
    <scope>PROTEIN SEQUENCE OF 33-49</scope>
    <scope>FUNCTION</scope>
    <scope>BIOPHYSICOCHEMICAL PROPERTIES</scope>
    <source>
        <strain>ATCC 38854 / NBRC 4033</strain>
    </source>
</reference>
<proteinExistence type="evidence at protein level"/>
<evidence type="ECO:0000250" key="1"/>
<evidence type="ECO:0000255" key="2"/>
<evidence type="ECO:0000255" key="3">
    <source>
        <dbReference type="PROSITE-ProRule" id="PRU10052"/>
    </source>
</evidence>
<evidence type="ECO:0000269" key="4">
    <source>
    </source>
</evidence>
<evidence type="ECO:0000305" key="5"/>
<name>PGLRA_ASPAW</name>
<protein>
    <recommendedName>
        <fullName>Endopolygalacturonase A</fullName>
        <ecNumber>3.2.1.15</ecNumber>
    </recommendedName>
    <alternativeName>
        <fullName>Pectinase A</fullName>
    </alternativeName>
    <alternativeName>
        <fullName>Polygalacturonase A</fullName>
    </alternativeName>
</protein>
<accession>Q9P358</accession>
<organism>
    <name type="scientific">Aspergillus awamori</name>
    <name type="common">Black koji mold</name>
    <dbReference type="NCBI Taxonomy" id="105351"/>
    <lineage>
        <taxon>Eukaryota</taxon>
        <taxon>Fungi</taxon>
        <taxon>Dikarya</taxon>
        <taxon>Ascomycota</taxon>
        <taxon>Pezizomycotina</taxon>
        <taxon>Eurotiomycetes</taxon>
        <taxon>Eurotiomycetidae</taxon>
        <taxon>Eurotiales</taxon>
        <taxon>Aspergillaceae</taxon>
        <taxon>Aspergillus</taxon>
    </lineage>
</organism>
<dbReference type="EC" id="3.2.1.15"/>
<dbReference type="EMBL" id="AB035082">
    <property type="protein sequence ID" value="BAA95408.1"/>
    <property type="molecule type" value="Genomic_DNA"/>
</dbReference>
<dbReference type="SMR" id="Q9P358"/>
<dbReference type="CAZy" id="GH28">
    <property type="family name" value="Glycoside Hydrolase Family 28"/>
</dbReference>
<dbReference type="GlyCosmos" id="Q9P358">
    <property type="glycosylation" value="1 site, No reported glycans"/>
</dbReference>
<dbReference type="GO" id="GO:0005576">
    <property type="term" value="C:extracellular region"/>
    <property type="evidence" value="ECO:0000250"/>
    <property type="project" value="UniProtKB"/>
</dbReference>
<dbReference type="GO" id="GO:0004650">
    <property type="term" value="F:polygalacturonase activity"/>
    <property type="evidence" value="ECO:0000314"/>
    <property type="project" value="UniProtKB"/>
</dbReference>
<dbReference type="GO" id="GO:0071555">
    <property type="term" value="P:cell wall organization"/>
    <property type="evidence" value="ECO:0007669"/>
    <property type="project" value="UniProtKB-KW"/>
</dbReference>
<dbReference type="GO" id="GO:0045490">
    <property type="term" value="P:pectin catabolic process"/>
    <property type="evidence" value="ECO:0000314"/>
    <property type="project" value="UniProtKB"/>
</dbReference>
<dbReference type="FunFam" id="2.160.20.10:FF:000002">
    <property type="entry name" value="Endopolygalacturonase D"/>
    <property type="match status" value="1"/>
</dbReference>
<dbReference type="Gene3D" id="2.160.20.10">
    <property type="entry name" value="Single-stranded right-handed beta-helix, Pectin lyase-like"/>
    <property type="match status" value="1"/>
</dbReference>
<dbReference type="InterPro" id="IPR000743">
    <property type="entry name" value="Glyco_hydro_28"/>
</dbReference>
<dbReference type="InterPro" id="IPR050434">
    <property type="entry name" value="Glycosyl_hydrlase_28"/>
</dbReference>
<dbReference type="InterPro" id="IPR006626">
    <property type="entry name" value="PbH1"/>
</dbReference>
<dbReference type="InterPro" id="IPR012334">
    <property type="entry name" value="Pectin_lyas_fold"/>
</dbReference>
<dbReference type="InterPro" id="IPR011050">
    <property type="entry name" value="Pectin_lyase_fold/virulence"/>
</dbReference>
<dbReference type="PANTHER" id="PTHR31884:SF13">
    <property type="entry name" value="ENDOPOLYGALACTURONASE B"/>
    <property type="match status" value="1"/>
</dbReference>
<dbReference type="PANTHER" id="PTHR31884">
    <property type="entry name" value="POLYGALACTURONASE"/>
    <property type="match status" value="1"/>
</dbReference>
<dbReference type="Pfam" id="PF00295">
    <property type="entry name" value="Glyco_hydro_28"/>
    <property type="match status" value="1"/>
</dbReference>
<dbReference type="SMART" id="SM00710">
    <property type="entry name" value="PbH1"/>
    <property type="match status" value="6"/>
</dbReference>
<dbReference type="SUPFAM" id="SSF51126">
    <property type="entry name" value="Pectin lyase-like"/>
    <property type="match status" value="1"/>
</dbReference>
<dbReference type="PROSITE" id="PS00502">
    <property type="entry name" value="POLYGALACTURONASE"/>
    <property type="match status" value="1"/>
</dbReference>
<keyword id="KW-0961">Cell wall biogenesis/degradation</keyword>
<keyword id="KW-0903">Direct protein sequencing</keyword>
<keyword id="KW-1015">Disulfide bond</keyword>
<keyword id="KW-0325">Glycoprotein</keyword>
<keyword id="KW-0326">Glycosidase</keyword>
<keyword id="KW-0378">Hydrolase</keyword>
<keyword id="KW-0677">Repeat</keyword>
<keyword id="KW-0964">Secreted</keyword>
<keyword id="KW-0732">Signal</keyword>
<keyword id="KW-0865">Zymogen</keyword>
<comment type="function">
    <text evidence="4">Involved in maceration and soft-rotting of plant tissue. Hydrolyzes the 1,4-alpha glycosidic bonds of de-esterified pectate in the smooth region of the plant cell wall.</text>
</comment>
<comment type="catalytic activity">
    <reaction>
        <text>(1,4-alpha-D-galacturonosyl)n+m + H2O = (1,4-alpha-D-galacturonosyl)n + (1,4-alpha-D-galacturonosyl)m.</text>
        <dbReference type="EC" id="3.2.1.15"/>
    </reaction>
</comment>
<comment type="biophysicochemical properties">
    <phDependence>
        <text evidence="4">Optimum pH is 2.0.</text>
    </phDependence>
    <temperatureDependence>
        <text evidence="4">Optimum temperature is 50 degrees Celsius.</text>
    </temperatureDependence>
</comment>
<comment type="subcellular location">
    <subcellularLocation>
        <location evidence="5">Secreted</location>
    </subcellularLocation>
</comment>
<comment type="similarity">
    <text evidence="5">Belongs to the glycosyl hydrolase 28 family.</text>
</comment>
<sequence>MPSAKPLFCLATLAGAALAAPAPSRATDFNKRSTCTFTDAATASESKTSCSDIVLKDITVPAGETLNLKDLNDGTTVTFEGTTTWEYEEWDGPLLRISGKDITVTQSSDAVLNGNGAKWWDGEGTNGGKTKPKFFYAHDLDDSKISGLYIKNTPVQAISVESDNLVIEDVTIDNSDGDSEGGHNTDGFDISESTYITITGATVKNQGDCVAINSGENIYFSGGTCSGGHGLSIGSVGGRDDNTVKNVTFIDSTVSDSENGVRIKTVYDATGTVEDITYSNIQLSGISDYGIVIEQDYENGDPTGTPSNGVTISDVTLEDITGSVDSDAVEIYILCGDGSCTDWTMSGIDITGGETSSDCENVPSGASCSQ</sequence>
<gene>
    <name type="primary">pgaA</name>
    <name type="synonym">pecA</name>
    <name type="synonym">ppas</name>
</gene>
<feature type="signal peptide" evidence="2">
    <location>
        <begin position="1"/>
        <end position="19"/>
    </location>
</feature>
<feature type="propeptide" id="PRO_0000393633" evidence="2">
    <location>
        <begin position="20"/>
        <end position="32"/>
    </location>
</feature>
<feature type="chain" id="PRO_0000393634" description="Endopolygalacturonase A">
    <location>
        <begin position="33"/>
        <end position="370"/>
    </location>
</feature>
<feature type="repeat" description="PbH1 1">
    <location>
        <begin position="162"/>
        <end position="192"/>
    </location>
</feature>
<feature type="repeat" description="PbH1 2">
    <location>
        <begin position="193"/>
        <end position="214"/>
    </location>
</feature>
<feature type="repeat" description="PbH1 3">
    <location>
        <begin position="215"/>
        <end position="235"/>
    </location>
</feature>
<feature type="repeat" description="PbH1 4">
    <location>
        <begin position="244"/>
        <end position="265"/>
    </location>
</feature>
<feature type="repeat" description="PbH1 5">
    <location>
        <begin position="273"/>
        <end position="295"/>
    </location>
</feature>
<feature type="repeat" description="PbH1 6">
    <location>
        <begin position="307"/>
        <end position="352"/>
    </location>
</feature>
<feature type="active site" evidence="3">
    <location>
        <position position="229"/>
    </location>
</feature>
<feature type="glycosylation site" description="N-linked (GlcNAc...) asparagine" evidence="2">
    <location>
        <position position="246"/>
    </location>
</feature>
<feature type="disulfide bond" evidence="1">
    <location>
        <begin position="35"/>
        <end position="50"/>
    </location>
</feature>
<feature type="disulfide bond" evidence="1">
    <location>
        <begin position="209"/>
        <end position="225"/>
    </location>
</feature>
<feature type="disulfide bond" evidence="1">
    <location>
        <begin position="335"/>
        <end position="340"/>
    </location>
</feature>
<feature type="disulfide bond" evidence="1">
    <location>
        <begin position="359"/>
        <end position="368"/>
    </location>
</feature>